<organism>
    <name type="scientific">Streptococcus pneumoniae (strain Hungary19A-6)</name>
    <dbReference type="NCBI Taxonomy" id="487214"/>
    <lineage>
        <taxon>Bacteria</taxon>
        <taxon>Bacillati</taxon>
        <taxon>Bacillota</taxon>
        <taxon>Bacilli</taxon>
        <taxon>Lactobacillales</taxon>
        <taxon>Streptococcaceae</taxon>
        <taxon>Streptococcus</taxon>
    </lineage>
</organism>
<evidence type="ECO:0000255" key="1">
    <source>
        <dbReference type="HAMAP-Rule" id="MF_01201"/>
    </source>
</evidence>
<reference key="1">
    <citation type="journal article" date="2010" name="Genome Biol.">
        <title>Structure and dynamics of the pan-genome of Streptococcus pneumoniae and closely related species.</title>
        <authorList>
            <person name="Donati C."/>
            <person name="Hiller N.L."/>
            <person name="Tettelin H."/>
            <person name="Muzzi A."/>
            <person name="Croucher N.J."/>
            <person name="Angiuoli S.V."/>
            <person name="Oggioni M."/>
            <person name="Dunning Hotopp J.C."/>
            <person name="Hu F.Z."/>
            <person name="Riley D.R."/>
            <person name="Covacci A."/>
            <person name="Mitchell T.J."/>
            <person name="Bentley S.D."/>
            <person name="Kilian M."/>
            <person name="Ehrlich G.D."/>
            <person name="Rappuoli R."/>
            <person name="Moxon E.R."/>
            <person name="Masignani V."/>
        </authorList>
    </citation>
    <scope>NUCLEOTIDE SEQUENCE [LARGE SCALE GENOMIC DNA]</scope>
    <source>
        <strain>Hungary19A-6</strain>
    </source>
</reference>
<name>ALR_STRPI</name>
<accession>B1I755</accession>
<proteinExistence type="inferred from homology"/>
<feature type="chain" id="PRO_1000138627" description="Alanine racemase">
    <location>
        <begin position="1"/>
        <end position="367"/>
    </location>
</feature>
<feature type="active site" description="Proton acceptor; specific for D-alanine" evidence="1">
    <location>
        <position position="40"/>
    </location>
</feature>
<feature type="active site" description="Proton acceptor; specific for L-alanine" evidence="1">
    <location>
        <position position="263"/>
    </location>
</feature>
<feature type="binding site" evidence="1">
    <location>
        <position position="136"/>
    </location>
    <ligand>
        <name>substrate</name>
    </ligand>
</feature>
<feature type="binding site" evidence="1">
    <location>
        <position position="310"/>
    </location>
    <ligand>
        <name>substrate</name>
    </ligand>
</feature>
<feature type="modified residue" description="N6-(pyridoxal phosphate)lysine" evidence="1">
    <location>
        <position position="40"/>
    </location>
</feature>
<sequence length="367" mass="39883">MKASPHRPTKALIHLGAIRQNIQQMGAHIPQGTLKLAVVKANAYGHGAVAVAKAIQDDVDGFCVSNIDEAIELRQAGLSKPILILGVSEIEAVALAKEYDFTLTVAGLEWIQALLDKEVDLTGLTVHLKIDSGMGRIGFREASEVEQAQDLLQQHGVRVEGIFTHFATADEESDDYFNAQLERFKTILASMKCLPELVHASNSATTLWHVETIFNAVRMGDAMYGLNPSGAVLDLPYDLIPALTLESALVHVKTVPAGACMGYGATYQADSEQVIATVPIGYADGWTRDMQNFSVLVDGQACPIVGRVSMDQITIRLPKPYPLGTKVTLIGSNGDKEITATQVATYRVTINYEVVCLLSDRIPREYY</sequence>
<keyword id="KW-0413">Isomerase</keyword>
<keyword id="KW-0663">Pyridoxal phosphate</keyword>
<gene>
    <name type="primary">alr</name>
    <name type="ordered locus">SPH_1802</name>
</gene>
<comment type="function">
    <text evidence="1">Catalyzes the interconversion of L-alanine and D-alanine. May also act on other amino acids.</text>
</comment>
<comment type="catalytic activity">
    <reaction evidence="1">
        <text>L-alanine = D-alanine</text>
        <dbReference type="Rhea" id="RHEA:20249"/>
        <dbReference type="ChEBI" id="CHEBI:57416"/>
        <dbReference type="ChEBI" id="CHEBI:57972"/>
        <dbReference type="EC" id="5.1.1.1"/>
    </reaction>
</comment>
<comment type="cofactor">
    <cofactor evidence="1">
        <name>pyridoxal 5'-phosphate</name>
        <dbReference type="ChEBI" id="CHEBI:597326"/>
    </cofactor>
</comment>
<comment type="pathway">
    <text evidence="1">Amino-acid biosynthesis; D-alanine biosynthesis; D-alanine from L-alanine: step 1/1.</text>
</comment>
<comment type="similarity">
    <text evidence="1">Belongs to the alanine racemase family.</text>
</comment>
<dbReference type="EC" id="5.1.1.1" evidence="1"/>
<dbReference type="EMBL" id="CP000936">
    <property type="protein sequence ID" value="ACA35943.1"/>
    <property type="molecule type" value="Genomic_DNA"/>
</dbReference>
<dbReference type="RefSeq" id="WP_000648077.1">
    <property type="nucleotide sequence ID" value="NC_010380.1"/>
</dbReference>
<dbReference type="SMR" id="B1I755"/>
<dbReference type="KEGG" id="spv:SPH_1802"/>
<dbReference type="HOGENOM" id="CLU_028393_2_1_9"/>
<dbReference type="UniPathway" id="UPA00042">
    <property type="reaction ID" value="UER00497"/>
</dbReference>
<dbReference type="Proteomes" id="UP000002163">
    <property type="component" value="Chromosome"/>
</dbReference>
<dbReference type="GO" id="GO:0005829">
    <property type="term" value="C:cytosol"/>
    <property type="evidence" value="ECO:0007669"/>
    <property type="project" value="TreeGrafter"/>
</dbReference>
<dbReference type="GO" id="GO:0008784">
    <property type="term" value="F:alanine racemase activity"/>
    <property type="evidence" value="ECO:0007669"/>
    <property type="project" value="UniProtKB-UniRule"/>
</dbReference>
<dbReference type="GO" id="GO:0030170">
    <property type="term" value="F:pyridoxal phosphate binding"/>
    <property type="evidence" value="ECO:0007669"/>
    <property type="project" value="UniProtKB-UniRule"/>
</dbReference>
<dbReference type="GO" id="GO:0030632">
    <property type="term" value="P:D-alanine biosynthetic process"/>
    <property type="evidence" value="ECO:0007669"/>
    <property type="project" value="UniProtKB-UniRule"/>
</dbReference>
<dbReference type="GO" id="GO:0009252">
    <property type="term" value="P:peptidoglycan biosynthetic process"/>
    <property type="evidence" value="ECO:0007669"/>
    <property type="project" value="TreeGrafter"/>
</dbReference>
<dbReference type="CDD" id="cd00430">
    <property type="entry name" value="PLPDE_III_AR"/>
    <property type="match status" value="1"/>
</dbReference>
<dbReference type="FunFam" id="2.40.37.10:FF:000006">
    <property type="entry name" value="Alanine racemase"/>
    <property type="match status" value="1"/>
</dbReference>
<dbReference type="FunFam" id="3.20.20.10:FF:000002">
    <property type="entry name" value="Alanine racemase"/>
    <property type="match status" value="1"/>
</dbReference>
<dbReference type="Gene3D" id="3.20.20.10">
    <property type="entry name" value="Alanine racemase"/>
    <property type="match status" value="1"/>
</dbReference>
<dbReference type="Gene3D" id="2.40.37.10">
    <property type="entry name" value="Lyase, Ornithine Decarboxylase, Chain A, domain 1"/>
    <property type="match status" value="1"/>
</dbReference>
<dbReference type="HAMAP" id="MF_01201">
    <property type="entry name" value="Ala_racemase"/>
    <property type="match status" value="1"/>
</dbReference>
<dbReference type="InterPro" id="IPR000821">
    <property type="entry name" value="Ala_racemase"/>
</dbReference>
<dbReference type="InterPro" id="IPR009006">
    <property type="entry name" value="Ala_racemase/Decarboxylase_C"/>
</dbReference>
<dbReference type="InterPro" id="IPR011079">
    <property type="entry name" value="Ala_racemase_C"/>
</dbReference>
<dbReference type="InterPro" id="IPR001608">
    <property type="entry name" value="Ala_racemase_N"/>
</dbReference>
<dbReference type="InterPro" id="IPR020622">
    <property type="entry name" value="Ala_racemase_pyridoxalP-BS"/>
</dbReference>
<dbReference type="InterPro" id="IPR029066">
    <property type="entry name" value="PLP-binding_barrel"/>
</dbReference>
<dbReference type="NCBIfam" id="TIGR00492">
    <property type="entry name" value="alr"/>
    <property type="match status" value="1"/>
</dbReference>
<dbReference type="PANTHER" id="PTHR30511">
    <property type="entry name" value="ALANINE RACEMASE"/>
    <property type="match status" value="1"/>
</dbReference>
<dbReference type="PANTHER" id="PTHR30511:SF0">
    <property type="entry name" value="ALANINE RACEMASE, CATABOLIC-RELATED"/>
    <property type="match status" value="1"/>
</dbReference>
<dbReference type="Pfam" id="PF00842">
    <property type="entry name" value="Ala_racemase_C"/>
    <property type="match status" value="1"/>
</dbReference>
<dbReference type="Pfam" id="PF01168">
    <property type="entry name" value="Ala_racemase_N"/>
    <property type="match status" value="1"/>
</dbReference>
<dbReference type="PRINTS" id="PR00992">
    <property type="entry name" value="ALARACEMASE"/>
</dbReference>
<dbReference type="SMART" id="SM01005">
    <property type="entry name" value="Ala_racemase_C"/>
    <property type="match status" value="1"/>
</dbReference>
<dbReference type="SUPFAM" id="SSF50621">
    <property type="entry name" value="Alanine racemase C-terminal domain-like"/>
    <property type="match status" value="1"/>
</dbReference>
<dbReference type="SUPFAM" id="SSF51419">
    <property type="entry name" value="PLP-binding barrel"/>
    <property type="match status" value="1"/>
</dbReference>
<dbReference type="PROSITE" id="PS00395">
    <property type="entry name" value="ALANINE_RACEMASE"/>
    <property type="match status" value="1"/>
</dbReference>
<protein>
    <recommendedName>
        <fullName evidence="1">Alanine racemase</fullName>
        <ecNumber evidence="1">5.1.1.1</ecNumber>
    </recommendedName>
</protein>